<dbReference type="EC" id="4.1.3.3" evidence="1 2 3 4"/>
<dbReference type="EMBL" id="Y12876">
    <property type="protein sequence ID" value="CAA73375.1"/>
    <property type="molecule type" value="Genomic_DNA"/>
</dbReference>
<dbReference type="EMBL" id="AF130859">
    <property type="protein sequence ID" value="AAD28763.1"/>
    <property type="molecule type" value="Genomic_DNA"/>
</dbReference>
<dbReference type="EMBL" id="BA000016">
    <property type="protein sequence ID" value="BAB79891.1"/>
    <property type="molecule type" value="Genomic_DNA"/>
</dbReference>
<dbReference type="RefSeq" id="WP_003457546.1">
    <property type="nucleotide sequence ID" value="NC_003366.1"/>
</dbReference>
<dbReference type="SMR" id="Q9S4K9"/>
<dbReference type="STRING" id="195102.gene:10489429"/>
<dbReference type="KEGG" id="cpe:CPE0185"/>
<dbReference type="HOGENOM" id="CLU_049343_6_0_9"/>
<dbReference type="BioCyc" id="MetaCyc:MONOMER-18990"/>
<dbReference type="UniPathway" id="UPA00629">
    <property type="reaction ID" value="UER00680"/>
</dbReference>
<dbReference type="Proteomes" id="UP000000818">
    <property type="component" value="Chromosome"/>
</dbReference>
<dbReference type="GO" id="GO:0005829">
    <property type="term" value="C:cytosol"/>
    <property type="evidence" value="ECO:0007669"/>
    <property type="project" value="TreeGrafter"/>
</dbReference>
<dbReference type="GO" id="GO:0008747">
    <property type="term" value="F:N-acetylneuraminate lyase activity"/>
    <property type="evidence" value="ECO:0007669"/>
    <property type="project" value="UniProtKB-UniRule"/>
</dbReference>
<dbReference type="GO" id="GO:0005975">
    <property type="term" value="P:carbohydrate metabolic process"/>
    <property type="evidence" value="ECO:0007669"/>
    <property type="project" value="UniProtKB-UniRule"/>
</dbReference>
<dbReference type="GO" id="GO:0019262">
    <property type="term" value="P:N-acetylneuraminate catabolic process"/>
    <property type="evidence" value="ECO:0007669"/>
    <property type="project" value="UniProtKB-UniRule"/>
</dbReference>
<dbReference type="CDD" id="cd00954">
    <property type="entry name" value="NAL"/>
    <property type="match status" value="1"/>
</dbReference>
<dbReference type="Gene3D" id="3.20.20.70">
    <property type="entry name" value="Aldolase class I"/>
    <property type="match status" value="1"/>
</dbReference>
<dbReference type="HAMAP" id="MF_01237">
    <property type="entry name" value="N_acetylneuram_lyase"/>
    <property type="match status" value="1"/>
</dbReference>
<dbReference type="InterPro" id="IPR013785">
    <property type="entry name" value="Aldolase_TIM"/>
</dbReference>
<dbReference type="InterPro" id="IPR002220">
    <property type="entry name" value="DapA-like"/>
</dbReference>
<dbReference type="InterPro" id="IPR005264">
    <property type="entry name" value="NanA"/>
</dbReference>
<dbReference type="InterPro" id="IPR020625">
    <property type="entry name" value="Schiff_base-form_aldolases_AS"/>
</dbReference>
<dbReference type="InterPro" id="IPR020624">
    <property type="entry name" value="Schiff_base-form_aldolases_CS"/>
</dbReference>
<dbReference type="NCBIfam" id="TIGR00683">
    <property type="entry name" value="nanA"/>
    <property type="match status" value="1"/>
</dbReference>
<dbReference type="NCBIfam" id="NF003164">
    <property type="entry name" value="PRK04147.1"/>
    <property type="match status" value="1"/>
</dbReference>
<dbReference type="PANTHER" id="PTHR42849">
    <property type="entry name" value="N-ACETYLNEURAMINATE LYASE"/>
    <property type="match status" value="1"/>
</dbReference>
<dbReference type="PANTHER" id="PTHR42849:SF1">
    <property type="entry name" value="N-ACETYLNEURAMINATE LYASE"/>
    <property type="match status" value="1"/>
</dbReference>
<dbReference type="Pfam" id="PF00701">
    <property type="entry name" value="DHDPS"/>
    <property type="match status" value="1"/>
</dbReference>
<dbReference type="PIRSF" id="PIRSF001365">
    <property type="entry name" value="DHDPS"/>
    <property type="match status" value="1"/>
</dbReference>
<dbReference type="PRINTS" id="PR00146">
    <property type="entry name" value="DHPICSNTHASE"/>
</dbReference>
<dbReference type="SMART" id="SM01130">
    <property type="entry name" value="DHDPS"/>
    <property type="match status" value="1"/>
</dbReference>
<dbReference type="SUPFAM" id="SSF51569">
    <property type="entry name" value="Aldolase"/>
    <property type="match status" value="1"/>
</dbReference>
<dbReference type="PROSITE" id="PS00665">
    <property type="entry name" value="DHDPS_1"/>
    <property type="match status" value="1"/>
</dbReference>
<dbReference type="PROSITE" id="PS00666">
    <property type="entry name" value="DHDPS_2"/>
    <property type="match status" value="1"/>
</dbReference>
<accession>Q9S4K9</accession>
<accession>O08360</accession>
<evidence type="ECO:0000255" key="1">
    <source>
        <dbReference type="HAMAP-Rule" id="MF_01237"/>
    </source>
</evidence>
<evidence type="ECO:0000269" key="2">
    <source>
    </source>
</evidence>
<evidence type="ECO:0000269" key="3">
    <source>
    </source>
</evidence>
<evidence type="ECO:0000269" key="4">
    <source>
    </source>
</evidence>
<evidence type="ECO:0000303" key="5">
    <source>
    </source>
</evidence>
<evidence type="ECO:0000303" key="6">
    <source>
    </source>
</evidence>
<evidence type="ECO:0000303" key="7">
    <source>
    </source>
</evidence>
<evidence type="ECO:0000305" key="8"/>
<evidence type="ECO:0000305" key="9">
    <source>
    </source>
</evidence>
<gene>
    <name evidence="5" type="primary">nanA</name>
    <name type="ordered locus">CPE0185</name>
</gene>
<keyword id="KW-0119">Carbohydrate metabolism</keyword>
<keyword id="KW-0963">Cytoplasm</keyword>
<keyword id="KW-0903">Direct protein sequencing</keyword>
<keyword id="KW-0456">Lyase</keyword>
<keyword id="KW-1185">Reference proteome</keyword>
<keyword id="KW-0704">Schiff base</keyword>
<protein>
    <recommendedName>
        <fullName evidence="1 6 7">N-acetylneuraminate lyase</fullName>
        <shortName evidence="1">NAL</shortName>
        <shortName evidence="1">Neu5Ac lyase</shortName>
        <ecNumber evidence="1 2 3 4">4.1.3.3</ecNumber>
    </recommendedName>
    <alternativeName>
        <fullName evidence="1">N-acetylneuraminate pyruvate-lyase</fullName>
    </alternativeName>
    <alternativeName>
        <fullName evidence="1">N-acetylneuraminic acid aldolase</fullName>
    </alternativeName>
    <alternativeName>
        <fullName evidence="1">Sialate lyase</fullName>
    </alternativeName>
    <alternativeName>
        <fullName evidence="1">Sialic acid aldolase</fullName>
    </alternativeName>
    <alternativeName>
        <fullName evidence="1 5">Sialic acid lyase</fullName>
    </alternativeName>
</protein>
<organism>
    <name type="scientific">Clostridium perfringens (strain 13 / Type A)</name>
    <dbReference type="NCBI Taxonomy" id="195102"/>
    <lineage>
        <taxon>Bacteria</taxon>
        <taxon>Bacillati</taxon>
        <taxon>Bacillota</taxon>
        <taxon>Clostridia</taxon>
        <taxon>Eubacteriales</taxon>
        <taxon>Clostridiaceae</taxon>
        <taxon>Clostridium</taxon>
    </lineage>
</organism>
<proteinExistence type="evidence at protein level"/>
<comment type="function">
    <text evidence="2 3 4">Catalyzes the reversible aldol cleavage of N-acetylneuraminic acid (sialic acid; Neu5Ac) to form pyruvate and N-acetylmannosamine (ManNAc) via a Schiff base intermediate.</text>
</comment>
<comment type="catalytic activity">
    <reaction evidence="1 2 3 4">
        <text>aceneuramate = aldehydo-N-acetyl-D-mannosamine + pyruvate</text>
        <dbReference type="Rhea" id="RHEA:23296"/>
        <dbReference type="ChEBI" id="CHEBI:15361"/>
        <dbReference type="ChEBI" id="CHEBI:17122"/>
        <dbReference type="ChEBI" id="CHEBI:173083"/>
        <dbReference type="EC" id="4.1.3.3"/>
    </reaction>
</comment>
<comment type="biophysicochemical properties">
    <kinetics>
        <KM evidence="3">3.2 mM for N-acetylneuraminate</KM>
        <Vmax evidence="3">27.5 umol/min/mg enzyme</Vmax>
    </kinetics>
    <phDependence>
        <text evidence="3">Optimum pH is 7.6.</text>
    </phDependence>
    <temperatureDependence>
        <text evidence="3">Optimum temperature is 65-70 degrees Celsius.</text>
    </temperatureDependence>
</comment>
<comment type="pathway">
    <text evidence="1">Amino-sugar metabolism; N-acetylneuraminate degradation; D-fructose 6-phosphate from N-acetylneuraminate: step 1/5.</text>
</comment>
<comment type="subunit">
    <text evidence="1">Homotetramer.</text>
</comment>
<comment type="subcellular location">
    <subcellularLocation>
        <location evidence="1">Cytoplasm</location>
    </subcellularLocation>
</comment>
<comment type="induction">
    <text evidence="2">By N-acetylneuraminate.</text>
</comment>
<comment type="similarity">
    <text evidence="8">Belongs to the DapA family. NanA subfamily.</text>
</comment>
<reference key="1">
    <citation type="journal article" date="1997" name="Glycoconj. J.">
        <title>Cloning, sequencing and expression of the acetylneuraminate lyase gene from Clostridium perfringens A99.</title>
        <authorList>
            <person name="Traving C."/>
            <person name="Roggentin P."/>
            <person name="Schauer R."/>
        </authorList>
    </citation>
    <scope>NUCLEOTIDE SEQUENCE [GENOMIC DNA]</scope>
    <scope>PROTEIN SEQUENCE OF 1-31</scope>
    <scope>FUNCTION</scope>
    <scope>CATALYTIC ACTIVITY</scope>
    <source>
        <strain>A99</strain>
    </source>
</reference>
<reference key="2">
    <citation type="journal article" date="1999" name="J. Bacteriol.">
        <title>Cloning, sequence, and transcriptional regulation of the operon encoding a putative N-acetylmannosamine-6-phosphate epimerase (nanE) and sialic acid lyase (nanA) in Clostridium perfringens.</title>
        <authorList>
            <person name="Walters D.M."/>
            <person name="Stirewalt V.L."/>
            <person name="Melville S.B."/>
        </authorList>
    </citation>
    <scope>NUCLEOTIDE SEQUENCE [GENOMIC DNA]</scope>
    <scope>FUNCTION</scope>
    <scope>CATALYTIC ACTIVITY</scope>
    <scope>INDUCTION</scope>
    <source>
        <strain>NCTC 8798 / Type A</strain>
    </source>
</reference>
<reference key="3">
    <citation type="journal article" date="2002" name="Proc. Natl. Acad. Sci. U.S.A.">
        <title>Complete genome sequence of Clostridium perfringens, an anaerobic flesh-eater.</title>
        <authorList>
            <person name="Shimizu T."/>
            <person name="Ohtani K."/>
            <person name="Hirakawa H."/>
            <person name="Ohshima K."/>
            <person name="Yamashita A."/>
            <person name="Shiba T."/>
            <person name="Ogasawara N."/>
            <person name="Hattori M."/>
            <person name="Kuhara S."/>
            <person name="Hayashi H."/>
        </authorList>
    </citation>
    <scope>NUCLEOTIDE SEQUENCE [LARGE SCALE GENOMIC DNA]</scope>
    <source>
        <strain>13 / Type A</strain>
    </source>
</reference>
<reference key="4">
    <citation type="journal article" date="2001" name="Eur. J. Biochem.">
        <title>Characterization and mutagenesis of the recombinant N-acetylneuraminate lyase from Clostridium perfringens: insights into the reaction mechanism.</title>
        <authorList>
            <person name="Krueger D."/>
            <person name="Schauer R."/>
            <person name="Traving C."/>
        </authorList>
    </citation>
    <scope>FUNCTION</scope>
    <scope>CATALYTIC ACTIVITY</scope>
    <scope>BIOPHYSICOCHEMICAL PROPERTIES</scope>
    <scope>MUTAGENESIS OF TYR-133; LYS-161; ASP-187 AND GLU-188</scope>
    <scope>ACTIVE SITE</scope>
    <source>
        <strain>A99</strain>
    </source>
</reference>
<name>NANA_CLOPE</name>
<sequence length="288" mass="32387">MKGIYSALLVSFDKDGNINEKGLREIIRHNIDVCKIDGLYVGGSTGENFMLSTDEKKRIFEIAMDEAKGQVKLIAQVGSVNLKEAVELAKFTTDLGYDAISAVTPFYYKFDFNEIKHYYETIINSVDNKLIIYSIPFLTGVNMSIEQFAELFENDKIIGVKFTAADFYLLERMRKAFPDKLIFAGFDEMMLPATVLGVDGAIGSTFNVNGVRARQIFEAAQKGDIETALEVQHVTNDLITDILNNGLYQTIKLILQEQGVDAGYCRQPMKEATEEMIAKAKEINKKYF</sequence>
<feature type="chain" id="PRO_0000103208" description="N-acetylneuraminate lyase">
    <location>
        <begin position="1"/>
        <end position="288"/>
    </location>
</feature>
<feature type="active site" description="Proton donor" evidence="1">
    <location>
        <position position="133"/>
    </location>
</feature>
<feature type="active site" description="Schiff-base intermediate with substrate" evidence="1 9">
    <location>
        <position position="161"/>
    </location>
</feature>
<feature type="binding site" evidence="1">
    <location>
        <position position="44"/>
    </location>
    <ligand>
        <name>aceneuramate</name>
        <dbReference type="ChEBI" id="CHEBI:173083"/>
    </ligand>
</feature>
<feature type="binding site" evidence="1">
    <location>
        <position position="45"/>
    </location>
    <ligand>
        <name>aceneuramate</name>
        <dbReference type="ChEBI" id="CHEBI:173083"/>
    </ligand>
</feature>
<feature type="binding site" evidence="1">
    <location>
        <position position="163"/>
    </location>
    <ligand>
        <name>aceneuramate</name>
        <dbReference type="ChEBI" id="CHEBI:173083"/>
    </ligand>
</feature>
<feature type="binding site" evidence="1">
    <location>
        <position position="185"/>
    </location>
    <ligand>
        <name>aceneuramate</name>
        <dbReference type="ChEBI" id="CHEBI:173083"/>
    </ligand>
</feature>
<feature type="binding site" evidence="1">
    <location>
        <position position="187"/>
    </location>
    <ligand>
        <name>aceneuramate</name>
        <dbReference type="ChEBI" id="CHEBI:173083"/>
    </ligand>
</feature>
<feature type="binding site" evidence="1">
    <location>
        <position position="188"/>
    </location>
    <ligand>
        <name>aceneuramate</name>
        <dbReference type="ChEBI" id="CHEBI:173083"/>
    </ligand>
</feature>
<feature type="binding site" evidence="1">
    <location>
        <position position="204"/>
    </location>
    <ligand>
        <name>aceneuramate</name>
        <dbReference type="ChEBI" id="CHEBI:173083"/>
    </ligand>
</feature>
<feature type="sequence variant" description="In strain: NCTC 8798.">
    <original>V</original>
    <variation>I</variation>
    <location>
        <position position="211"/>
    </location>
</feature>
<feature type="sequence variant" description="In strain: NCTC 8798.">
    <original>A</original>
    <variation>E</variation>
    <location>
        <position position="278"/>
    </location>
</feature>
<feature type="mutagenesis site" description="Large decrease in activity but increase in substrate affinity." evidence="3">
    <original>Y</original>
    <variation>F</variation>
    <variation>H</variation>
    <variation>W</variation>
    <variation>C</variation>
    <location>
        <position position="133"/>
    </location>
</feature>
<feature type="mutagenesis site" description="Loss of activity." evidence="3">
    <original>K</original>
    <variation>Q</variation>
    <variation>A</variation>
    <location>
        <position position="161"/>
    </location>
</feature>
<feature type="mutagenesis site" description="33-fold decrease in activity but no change in substrate affinity." evidence="3">
    <original>K</original>
    <variation>R</variation>
    <location>
        <position position="161"/>
    </location>
</feature>
<feature type="mutagenesis site" description="9-fold decrease in substrate affinity but almost no change in activity." evidence="3">
    <original>D</original>
    <variation>E</variation>
    <location>
        <position position="187"/>
    </location>
</feature>
<feature type="mutagenesis site" description="Large decrease in substrate affinity and activity." evidence="3">
    <original>D</original>
    <variation>N</variation>
    <location>
        <position position="187"/>
    </location>
</feature>
<feature type="mutagenesis site" description="Decrease in substrate affinity but almost no change in activity." evidence="3">
    <original>E</original>
    <variation>D</variation>
    <variation>Q</variation>
    <location>
        <position position="188"/>
    </location>
</feature>